<keyword id="KW-0028">Amino-acid biosynthesis</keyword>
<keyword id="KW-0963">Cytoplasm</keyword>
<keyword id="KW-0413">Isomerase</keyword>
<keyword id="KW-0457">Lysine biosynthesis</keyword>
<gene>
    <name evidence="1" type="primary">dapF</name>
    <name type="ordered locus">HPSH_04045</name>
</gene>
<sequence length="273" mass="30625">MVFYKYSGSGNDFLIVQSFKKKDFSNLAKQVCHRHEGFGADGLVVVLPSKDYDYEWDFYNSDGSKAGMCGNASRCVGLFAYQHAIASKNHVFLAGKREISICIEEPNIIESNLGNYKILDTIPALRCEKFFTNDSVLENIPTFYLIDTGVPHLVGFVKNKEWLNSLNTLELRALRHAFNANINIAFIENKETIFLQTYERGVEDFTLACGTGMAAVFIAARIFYNTPEKAALIPKSSESLELSLKNDEIFYKGAVRYIGMSVLGMSVFENGCF</sequence>
<comment type="function">
    <text evidence="1">Catalyzes the stereoinversion of LL-2,6-diaminopimelate (L,L-DAP) to meso-diaminopimelate (meso-DAP), a precursor of L-lysine and an essential component of the bacterial peptidoglycan.</text>
</comment>
<comment type="catalytic activity">
    <reaction evidence="1">
        <text>(2S,6S)-2,6-diaminopimelate = meso-2,6-diaminopimelate</text>
        <dbReference type="Rhea" id="RHEA:15393"/>
        <dbReference type="ChEBI" id="CHEBI:57609"/>
        <dbReference type="ChEBI" id="CHEBI:57791"/>
        <dbReference type="EC" id="5.1.1.7"/>
    </reaction>
</comment>
<comment type="pathway">
    <text evidence="1">Amino-acid biosynthesis; L-lysine biosynthesis via DAP pathway; DL-2,6-diaminopimelate from LL-2,6-diaminopimelate: step 1/1.</text>
</comment>
<comment type="subunit">
    <text evidence="1">Homodimer.</text>
</comment>
<comment type="subcellular location">
    <subcellularLocation>
        <location evidence="1">Cytoplasm</location>
    </subcellularLocation>
</comment>
<comment type="similarity">
    <text evidence="1">Belongs to the diaminopimelate epimerase family.</text>
</comment>
<name>DAPF_HELPS</name>
<proteinExistence type="inferred from homology"/>
<protein>
    <recommendedName>
        <fullName evidence="1">Diaminopimelate epimerase</fullName>
        <shortName evidence="1">DAP epimerase</shortName>
        <ecNumber evidence="1">5.1.1.7</ecNumber>
    </recommendedName>
    <alternativeName>
        <fullName evidence="1">PLP-independent amino acid racemase</fullName>
    </alternativeName>
</protein>
<dbReference type="EC" id="5.1.1.7" evidence="1"/>
<dbReference type="EMBL" id="CP001072">
    <property type="protein sequence ID" value="ACD48244.1"/>
    <property type="molecule type" value="Genomic_DNA"/>
</dbReference>
<dbReference type="RefSeq" id="WP_000232457.1">
    <property type="nucleotide sequence ID" value="NC_010698.2"/>
</dbReference>
<dbReference type="SMR" id="B2UTR2"/>
<dbReference type="KEGG" id="hps:HPSH_04045"/>
<dbReference type="HOGENOM" id="CLU_053306_3_2_7"/>
<dbReference type="UniPathway" id="UPA00034">
    <property type="reaction ID" value="UER00025"/>
</dbReference>
<dbReference type="GO" id="GO:0005829">
    <property type="term" value="C:cytosol"/>
    <property type="evidence" value="ECO:0007669"/>
    <property type="project" value="TreeGrafter"/>
</dbReference>
<dbReference type="GO" id="GO:0008837">
    <property type="term" value="F:diaminopimelate epimerase activity"/>
    <property type="evidence" value="ECO:0007669"/>
    <property type="project" value="UniProtKB-UniRule"/>
</dbReference>
<dbReference type="GO" id="GO:0009089">
    <property type="term" value="P:lysine biosynthetic process via diaminopimelate"/>
    <property type="evidence" value="ECO:0007669"/>
    <property type="project" value="UniProtKB-UniRule"/>
</dbReference>
<dbReference type="FunFam" id="3.10.310.10:FF:000025">
    <property type="entry name" value="Diaminopimelate epimerase"/>
    <property type="match status" value="1"/>
</dbReference>
<dbReference type="Gene3D" id="3.10.310.10">
    <property type="entry name" value="Diaminopimelate Epimerase, Chain A, domain 1"/>
    <property type="match status" value="2"/>
</dbReference>
<dbReference type="HAMAP" id="MF_00197">
    <property type="entry name" value="DAP_epimerase"/>
    <property type="match status" value="1"/>
</dbReference>
<dbReference type="InterPro" id="IPR018510">
    <property type="entry name" value="DAP_epimerase_AS"/>
</dbReference>
<dbReference type="InterPro" id="IPR001653">
    <property type="entry name" value="DAP_epimerase_DapF"/>
</dbReference>
<dbReference type="NCBIfam" id="TIGR00652">
    <property type="entry name" value="DapF"/>
    <property type="match status" value="1"/>
</dbReference>
<dbReference type="PANTHER" id="PTHR31689:SF0">
    <property type="entry name" value="DIAMINOPIMELATE EPIMERASE"/>
    <property type="match status" value="1"/>
</dbReference>
<dbReference type="PANTHER" id="PTHR31689">
    <property type="entry name" value="DIAMINOPIMELATE EPIMERASE, CHLOROPLASTIC"/>
    <property type="match status" value="1"/>
</dbReference>
<dbReference type="Pfam" id="PF01678">
    <property type="entry name" value="DAP_epimerase"/>
    <property type="match status" value="2"/>
</dbReference>
<dbReference type="SUPFAM" id="SSF54506">
    <property type="entry name" value="Diaminopimelate epimerase-like"/>
    <property type="match status" value="2"/>
</dbReference>
<dbReference type="PROSITE" id="PS01326">
    <property type="entry name" value="DAP_EPIMERASE"/>
    <property type="match status" value="1"/>
</dbReference>
<organism>
    <name type="scientific">Helicobacter pylori (strain Shi470)</name>
    <dbReference type="NCBI Taxonomy" id="512562"/>
    <lineage>
        <taxon>Bacteria</taxon>
        <taxon>Pseudomonadati</taxon>
        <taxon>Campylobacterota</taxon>
        <taxon>Epsilonproteobacteria</taxon>
        <taxon>Campylobacterales</taxon>
        <taxon>Helicobacteraceae</taxon>
        <taxon>Helicobacter</taxon>
    </lineage>
</organism>
<reference key="1">
    <citation type="submission" date="2008-05" db="EMBL/GenBank/DDBJ databases">
        <title>Genome sequence of Helicobacter pylori from the remote Amazon: traces of Asian ancestry of the first Americans.</title>
        <authorList>
            <person name="Kersulyte D."/>
            <person name="Kalia A."/>
            <person name="Gilman R.H."/>
            <person name="Berg D.E."/>
        </authorList>
    </citation>
    <scope>NUCLEOTIDE SEQUENCE [LARGE SCALE GENOMIC DNA]</scope>
    <source>
        <strain>Shi470</strain>
    </source>
</reference>
<evidence type="ECO:0000255" key="1">
    <source>
        <dbReference type="HAMAP-Rule" id="MF_00197"/>
    </source>
</evidence>
<feature type="chain" id="PRO_1000099241" description="Diaminopimelate epimerase">
    <location>
        <begin position="1"/>
        <end position="273"/>
    </location>
</feature>
<feature type="active site" description="Proton donor" evidence="1">
    <location>
        <position position="69"/>
    </location>
</feature>
<feature type="active site" description="Proton acceptor" evidence="1">
    <location>
        <position position="209"/>
    </location>
</feature>
<feature type="binding site" evidence="1">
    <location>
        <position position="11"/>
    </location>
    <ligand>
        <name>substrate</name>
    </ligand>
</feature>
<feature type="binding site" evidence="1">
    <location>
        <position position="60"/>
    </location>
    <ligand>
        <name>substrate</name>
    </ligand>
</feature>
<feature type="binding site" evidence="1">
    <location>
        <begin position="70"/>
        <end position="71"/>
    </location>
    <ligand>
        <name>substrate</name>
    </ligand>
</feature>
<feature type="binding site" evidence="1">
    <location>
        <position position="181"/>
    </location>
    <ligand>
        <name>substrate</name>
    </ligand>
</feature>
<feature type="binding site" evidence="1">
    <location>
        <begin position="199"/>
        <end position="200"/>
    </location>
    <ligand>
        <name>substrate</name>
    </ligand>
</feature>
<feature type="binding site" evidence="1">
    <location>
        <begin position="210"/>
        <end position="211"/>
    </location>
    <ligand>
        <name>substrate</name>
    </ligand>
</feature>
<feature type="site" description="Could be important to modulate the pK values of the two catalytic cysteine residues" evidence="1">
    <location>
        <position position="152"/>
    </location>
</feature>
<feature type="site" description="Could be important to modulate the pK values of the two catalytic cysteine residues" evidence="1">
    <location>
        <position position="199"/>
    </location>
</feature>
<accession>B2UTR2</accession>